<keyword id="KW-0021">Allosteric enzyme</keyword>
<keyword id="KW-0963">Cytoplasm</keyword>
<keyword id="KW-0378">Hydrolase</keyword>
<keyword id="KW-0479">Metal-binding</keyword>
<keyword id="KW-0645">Protease</keyword>
<keyword id="KW-0915">Sodium</keyword>
<keyword id="KW-0346">Stress response</keyword>
<keyword id="KW-0888">Threonine protease</keyword>
<accession>A8FL81</accession>
<comment type="function">
    <text evidence="1">Protease subunit of a proteasome-like degradation complex believed to be a general protein degrading machinery.</text>
</comment>
<comment type="catalytic activity">
    <reaction evidence="1">
        <text>ATP-dependent cleavage of peptide bonds with broad specificity.</text>
        <dbReference type="EC" id="3.4.25.2"/>
    </reaction>
</comment>
<comment type="activity regulation">
    <text evidence="1">Allosterically activated by HslU binding.</text>
</comment>
<comment type="subunit">
    <text evidence="1">A double ring-shaped homohexamer of HslV is capped on each side by a ring-shaped HslU homohexamer. The assembly of the HslU/HslV complex is dependent on binding of ATP.</text>
</comment>
<comment type="subcellular location">
    <subcellularLocation>
        <location evidence="1">Cytoplasm</location>
    </subcellularLocation>
</comment>
<comment type="similarity">
    <text evidence="1">Belongs to the peptidase T1B family. HslV subfamily.</text>
</comment>
<dbReference type="EC" id="3.4.25.2" evidence="1"/>
<dbReference type="EMBL" id="CP000814">
    <property type="protein sequence ID" value="ABV52218.1"/>
    <property type="molecule type" value="Genomic_DNA"/>
</dbReference>
<dbReference type="RefSeq" id="WP_002855129.1">
    <property type="nucleotide sequence ID" value="NC_009839.1"/>
</dbReference>
<dbReference type="SMR" id="A8FL81"/>
<dbReference type="KEGG" id="cju:C8J_0619"/>
<dbReference type="HOGENOM" id="CLU_093872_1_1_7"/>
<dbReference type="GO" id="GO:0009376">
    <property type="term" value="C:HslUV protease complex"/>
    <property type="evidence" value="ECO:0007669"/>
    <property type="project" value="UniProtKB-UniRule"/>
</dbReference>
<dbReference type="GO" id="GO:0005839">
    <property type="term" value="C:proteasome core complex"/>
    <property type="evidence" value="ECO:0007669"/>
    <property type="project" value="InterPro"/>
</dbReference>
<dbReference type="GO" id="GO:0046872">
    <property type="term" value="F:metal ion binding"/>
    <property type="evidence" value="ECO:0007669"/>
    <property type="project" value="UniProtKB-KW"/>
</dbReference>
<dbReference type="GO" id="GO:0004298">
    <property type="term" value="F:threonine-type endopeptidase activity"/>
    <property type="evidence" value="ECO:0007669"/>
    <property type="project" value="UniProtKB-KW"/>
</dbReference>
<dbReference type="GO" id="GO:0051603">
    <property type="term" value="P:proteolysis involved in protein catabolic process"/>
    <property type="evidence" value="ECO:0007669"/>
    <property type="project" value="InterPro"/>
</dbReference>
<dbReference type="CDD" id="cd01913">
    <property type="entry name" value="protease_HslV"/>
    <property type="match status" value="1"/>
</dbReference>
<dbReference type="Gene3D" id="3.60.20.10">
    <property type="entry name" value="Glutamine Phosphoribosylpyrophosphate, subunit 1, domain 1"/>
    <property type="match status" value="1"/>
</dbReference>
<dbReference type="HAMAP" id="MF_00248">
    <property type="entry name" value="HslV"/>
    <property type="match status" value="1"/>
</dbReference>
<dbReference type="InterPro" id="IPR022281">
    <property type="entry name" value="ATP-dep_Prtase_HsIV_su"/>
</dbReference>
<dbReference type="InterPro" id="IPR029055">
    <property type="entry name" value="Ntn_hydrolases_N"/>
</dbReference>
<dbReference type="InterPro" id="IPR001353">
    <property type="entry name" value="Proteasome_sua/b"/>
</dbReference>
<dbReference type="InterPro" id="IPR023333">
    <property type="entry name" value="Proteasome_suB-type"/>
</dbReference>
<dbReference type="NCBIfam" id="TIGR03692">
    <property type="entry name" value="ATP_dep_HslV"/>
    <property type="match status" value="1"/>
</dbReference>
<dbReference type="NCBIfam" id="NF003964">
    <property type="entry name" value="PRK05456.1"/>
    <property type="match status" value="1"/>
</dbReference>
<dbReference type="PANTHER" id="PTHR32194:SF0">
    <property type="entry name" value="ATP-DEPENDENT PROTEASE SUBUNIT HSLV"/>
    <property type="match status" value="1"/>
</dbReference>
<dbReference type="PANTHER" id="PTHR32194">
    <property type="entry name" value="METALLOPROTEASE TLDD"/>
    <property type="match status" value="1"/>
</dbReference>
<dbReference type="Pfam" id="PF00227">
    <property type="entry name" value="Proteasome"/>
    <property type="match status" value="1"/>
</dbReference>
<dbReference type="PIRSF" id="PIRSF039093">
    <property type="entry name" value="HslV"/>
    <property type="match status" value="1"/>
</dbReference>
<dbReference type="SUPFAM" id="SSF56235">
    <property type="entry name" value="N-terminal nucleophile aminohydrolases (Ntn hydrolases)"/>
    <property type="match status" value="1"/>
</dbReference>
<dbReference type="PROSITE" id="PS51476">
    <property type="entry name" value="PROTEASOME_BETA_2"/>
    <property type="match status" value="1"/>
</dbReference>
<gene>
    <name evidence="1" type="primary">hslV</name>
    <name type="ordered locus">C8J_0619</name>
</gene>
<feature type="chain" id="PRO_1000071846" description="ATP-dependent protease subunit HslV">
    <location>
        <begin position="1"/>
        <end position="180"/>
    </location>
</feature>
<feature type="active site" evidence="1">
    <location>
        <position position="5"/>
    </location>
</feature>
<feature type="binding site" evidence="1">
    <location>
        <position position="161"/>
    </location>
    <ligand>
        <name>Na(+)</name>
        <dbReference type="ChEBI" id="CHEBI:29101"/>
    </ligand>
</feature>
<feature type="binding site" evidence="1">
    <location>
        <position position="164"/>
    </location>
    <ligand>
        <name>Na(+)</name>
        <dbReference type="ChEBI" id="CHEBI:29101"/>
    </ligand>
</feature>
<feature type="binding site" evidence="1">
    <location>
        <position position="167"/>
    </location>
    <ligand>
        <name>Na(+)</name>
        <dbReference type="ChEBI" id="CHEBI:29101"/>
    </ligand>
</feature>
<sequence>MFHATTILAYKGKNKSVIGGDGQVSFGNTVLKGNAVKIRKLNNGKVLAGFAGSTADAFNLFDMFENLLQSSKGDLLKAAIDFSKEWRKDKYLRKLEAMMLVLDRNHIFLLSGTGDVVEPEDGQIAAIGSGGNYALSAARALAKHASLDEEELVKSSLQIAGEICIYTNTNIKTYVIEDEK</sequence>
<evidence type="ECO:0000255" key="1">
    <source>
        <dbReference type="HAMAP-Rule" id="MF_00248"/>
    </source>
</evidence>
<organism>
    <name type="scientific">Campylobacter jejuni subsp. jejuni serotype O:6 (strain 81116 / NCTC 11828)</name>
    <dbReference type="NCBI Taxonomy" id="407148"/>
    <lineage>
        <taxon>Bacteria</taxon>
        <taxon>Pseudomonadati</taxon>
        <taxon>Campylobacterota</taxon>
        <taxon>Epsilonproteobacteria</taxon>
        <taxon>Campylobacterales</taxon>
        <taxon>Campylobacteraceae</taxon>
        <taxon>Campylobacter</taxon>
    </lineage>
</organism>
<proteinExistence type="inferred from homology"/>
<name>HSLV_CAMJ8</name>
<reference key="1">
    <citation type="journal article" date="2007" name="J. Bacteriol.">
        <title>The complete genome sequence of Campylobacter jejuni strain 81116 (NCTC11828).</title>
        <authorList>
            <person name="Pearson B.M."/>
            <person name="Gaskin D.J.H."/>
            <person name="Segers R.P.A.M."/>
            <person name="Wells J.M."/>
            <person name="Nuijten P.J.M."/>
            <person name="van Vliet A.H.M."/>
        </authorList>
    </citation>
    <scope>NUCLEOTIDE SEQUENCE [LARGE SCALE GENOMIC DNA]</scope>
    <source>
        <strain>81116 / NCTC 11828</strain>
    </source>
</reference>
<protein>
    <recommendedName>
        <fullName evidence="1">ATP-dependent protease subunit HslV</fullName>
        <ecNumber evidence="1">3.4.25.2</ecNumber>
    </recommendedName>
</protein>